<feature type="chain" id="PRO_1000074682" description="Ribonuclease H">
    <location>
        <begin position="1"/>
        <end position="156"/>
    </location>
</feature>
<feature type="domain" description="RNase H type-1" evidence="2">
    <location>
        <begin position="1"/>
        <end position="142"/>
    </location>
</feature>
<feature type="region of interest" description="Disordered" evidence="3">
    <location>
        <begin position="135"/>
        <end position="156"/>
    </location>
</feature>
<feature type="binding site" evidence="1">
    <location>
        <position position="10"/>
    </location>
    <ligand>
        <name>Mg(2+)</name>
        <dbReference type="ChEBI" id="CHEBI:18420"/>
        <label>1</label>
    </ligand>
</feature>
<feature type="binding site" evidence="1">
    <location>
        <position position="10"/>
    </location>
    <ligand>
        <name>Mg(2+)</name>
        <dbReference type="ChEBI" id="CHEBI:18420"/>
        <label>2</label>
    </ligand>
</feature>
<feature type="binding site" evidence="1">
    <location>
        <position position="48"/>
    </location>
    <ligand>
        <name>Mg(2+)</name>
        <dbReference type="ChEBI" id="CHEBI:18420"/>
        <label>1</label>
    </ligand>
</feature>
<feature type="binding site" evidence="1">
    <location>
        <position position="70"/>
    </location>
    <ligand>
        <name>Mg(2+)</name>
        <dbReference type="ChEBI" id="CHEBI:18420"/>
        <label>1</label>
    </ligand>
</feature>
<feature type="binding site" evidence="1">
    <location>
        <position position="134"/>
    </location>
    <ligand>
        <name>Mg(2+)</name>
        <dbReference type="ChEBI" id="CHEBI:18420"/>
        <label>2</label>
    </ligand>
</feature>
<evidence type="ECO:0000255" key="1">
    <source>
        <dbReference type="HAMAP-Rule" id="MF_00042"/>
    </source>
</evidence>
<evidence type="ECO:0000255" key="2">
    <source>
        <dbReference type="PROSITE-ProRule" id="PRU00408"/>
    </source>
</evidence>
<evidence type="ECO:0000256" key="3">
    <source>
        <dbReference type="SAM" id="MobiDB-lite"/>
    </source>
</evidence>
<organism>
    <name type="scientific">Vibrio cholerae serotype O1 (strain ATCC 39541 / Classical Ogawa 395 / O395)</name>
    <dbReference type="NCBI Taxonomy" id="345073"/>
    <lineage>
        <taxon>Bacteria</taxon>
        <taxon>Pseudomonadati</taxon>
        <taxon>Pseudomonadota</taxon>
        <taxon>Gammaproteobacteria</taxon>
        <taxon>Vibrionales</taxon>
        <taxon>Vibrionaceae</taxon>
        <taxon>Vibrio</taxon>
    </lineage>
</organism>
<name>RNH_VIBC3</name>
<reference key="1">
    <citation type="submission" date="2007-03" db="EMBL/GenBank/DDBJ databases">
        <authorList>
            <person name="Heidelberg J."/>
        </authorList>
    </citation>
    <scope>NUCLEOTIDE SEQUENCE [LARGE SCALE GENOMIC DNA]</scope>
    <source>
        <strain>ATCC 39541 / Classical Ogawa 395 / O395</strain>
    </source>
</reference>
<reference key="2">
    <citation type="journal article" date="2008" name="PLoS ONE">
        <title>A recalibrated molecular clock and independent origins for the cholera pandemic clones.</title>
        <authorList>
            <person name="Feng L."/>
            <person name="Reeves P.R."/>
            <person name="Lan R."/>
            <person name="Ren Y."/>
            <person name="Gao C."/>
            <person name="Zhou Z."/>
            <person name="Ren Y."/>
            <person name="Cheng J."/>
            <person name="Wang W."/>
            <person name="Wang J."/>
            <person name="Qian W."/>
            <person name="Li D."/>
            <person name="Wang L."/>
        </authorList>
    </citation>
    <scope>NUCLEOTIDE SEQUENCE [LARGE SCALE GENOMIC DNA]</scope>
    <source>
        <strain>ATCC 39541 / Classical Ogawa 395 / O395</strain>
    </source>
</reference>
<accession>A5F633</accession>
<accession>C3M3J1</accession>
<proteinExistence type="inferred from homology"/>
<protein>
    <recommendedName>
        <fullName evidence="1">Ribonuclease H</fullName>
        <shortName evidence="1">RNase H</shortName>
        <ecNumber evidence="1">3.1.26.4</ecNumber>
    </recommendedName>
</protein>
<gene>
    <name evidence="1" type="primary">rnhA</name>
    <name type="ordered locus">VC0395_A1826</name>
    <name type="ordered locus">VC395_2350</name>
</gene>
<sequence length="156" mass="17953">MNKQVEIFTDGSCLGNPGPGGYGIVMRYKQVEKTLARGYRLTTNNRMEMLAAVMALQALKEPCRVILTTDSQYVRQGITQWIHNWKLRGWKTADKKPVKNADLWQALDKETARHQVEWRWVKGHAGHRENEMCDELARQAAENPTEDDIGYQPEPQ</sequence>
<dbReference type="EC" id="3.1.26.4" evidence="1"/>
<dbReference type="EMBL" id="CP000627">
    <property type="protein sequence ID" value="ABQ21665.1"/>
    <property type="molecule type" value="Genomic_DNA"/>
</dbReference>
<dbReference type="EMBL" id="CP001235">
    <property type="protein sequence ID" value="ACP10340.1"/>
    <property type="molecule type" value="Genomic_DNA"/>
</dbReference>
<dbReference type="RefSeq" id="WP_001041874.1">
    <property type="nucleotide sequence ID" value="NZ_JAACZH010000022.1"/>
</dbReference>
<dbReference type="SMR" id="A5F633"/>
<dbReference type="KEGG" id="vco:VC0395_A1826"/>
<dbReference type="KEGG" id="vcr:VC395_2350"/>
<dbReference type="PATRIC" id="fig|345073.21.peg.2266"/>
<dbReference type="eggNOG" id="COG0328">
    <property type="taxonomic scope" value="Bacteria"/>
</dbReference>
<dbReference type="HOGENOM" id="CLU_030894_6_0_6"/>
<dbReference type="OrthoDB" id="7845843at2"/>
<dbReference type="Proteomes" id="UP000000249">
    <property type="component" value="Chromosome 2"/>
</dbReference>
<dbReference type="GO" id="GO:0005737">
    <property type="term" value="C:cytoplasm"/>
    <property type="evidence" value="ECO:0007669"/>
    <property type="project" value="UniProtKB-SubCell"/>
</dbReference>
<dbReference type="GO" id="GO:0000287">
    <property type="term" value="F:magnesium ion binding"/>
    <property type="evidence" value="ECO:0007669"/>
    <property type="project" value="UniProtKB-UniRule"/>
</dbReference>
<dbReference type="GO" id="GO:0003676">
    <property type="term" value="F:nucleic acid binding"/>
    <property type="evidence" value="ECO:0007669"/>
    <property type="project" value="InterPro"/>
</dbReference>
<dbReference type="GO" id="GO:0004523">
    <property type="term" value="F:RNA-DNA hybrid ribonuclease activity"/>
    <property type="evidence" value="ECO:0007669"/>
    <property type="project" value="UniProtKB-UniRule"/>
</dbReference>
<dbReference type="GO" id="GO:0043137">
    <property type="term" value="P:DNA replication, removal of RNA primer"/>
    <property type="evidence" value="ECO:0007669"/>
    <property type="project" value="TreeGrafter"/>
</dbReference>
<dbReference type="CDD" id="cd09278">
    <property type="entry name" value="RNase_HI_prokaryote_like"/>
    <property type="match status" value="1"/>
</dbReference>
<dbReference type="FunFam" id="3.30.420.10:FF:000008">
    <property type="entry name" value="Ribonuclease H"/>
    <property type="match status" value="1"/>
</dbReference>
<dbReference type="Gene3D" id="3.30.420.10">
    <property type="entry name" value="Ribonuclease H-like superfamily/Ribonuclease H"/>
    <property type="match status" value="1"/>
</dbReference>
<dbReference type="HAMAP" id="MF_00042">
    <property type="entry name" value="RNase_H"/>
    <property type="match status" value="1"/>
</dbReference>
<dbReference type="InterPro" id="IPR050092">
    <property type="entry name" value="RNase_H"/>
</dbReference>
<dbReference type="InterPro" id="IPR012337">
    <property type="entry name" value="RNaseH-like_sf"/>
</dbReference>
<dbReference type="InterPro" id="IPR002156">
    <property type="entry name" value="RNaseH_domain"/>
</dbReference>
<dbReference type="InterPro" id="IPR036397">
    <property type="entry name" value="RNaseH_sf"/>
</dbReference>
<dbReference type="InterPro" id="IPR022892">
    <property type="entry name" value="RNaseHI"/>
</dbReference>
<dbReference type="NCBIfam" id="NF001236">
    <property type="entry name" value="PRK00203.1"/>
    <property type="match status" value="1"/>
</dbReference>
<dbReference type="PANTHER" id="PTHR10642">
    <property type="entry name" value="RIBONUCLEASE H1"/>
    <property type="match status" value="1"/>
</dbReference>
<dbReference type="PANTHER" id="PTHR10642:SF26">
    <property type="entry name" value="RIBONUCLEASE H1"/>
    <property type="match status" value="1"/>
</dbReference>
<dbReference type="Pfam" id="PF00075">
    <property type="entry name" value="RNase_H"/>
    <property type="match status" value="1"/>
</dbReference>
<dbReference type="SUPFAM" id="SSF53098">
    <property type="entry name" value="Ribonuclease H-like"/>
    <property type="match status" value="1"/>
</dbReference>
<dbReference type="PROSITE" id="PS50879">
    <property type="entry name" value="RNASE_H_1"/>
    <property type="match status" value="1"/>
</dbReference>
<keyword id="KW-0963">Cytoplasm</keyword>
<keyword id="KW-0255">Endonuclease</keyword>
<keyword id="KW-0378">Hydrolase</keyword>
<keyword id="KW-0460">Magnesium</keyword>
<keyword id="KW-0479">Metal-binding</keyword>
<keyword id="KW-0540">Nuclease</keyword>
<comment type="function">
    <text evidence="1">Endonuclease that specifically degrades the RNA of RNA-DNA hybrids.</text>
</comment>
<comment type="catalytic activity">
    <reaction evidence="1">
        <text>Endonucleolytic cleavage to 5'-phosphomonoester.</text>
        <dbReference type="EC" id="3.1.26.4"/>
    </reaction>
</comment>
<comment type="cofactor">
    <cofactor evidence="1">
        <name>Mg(2+)</name>
        <dbReference type="ChEBI" id="CHEBI:18420"/>
    </cofactor>
    <text evidence="1">Binds 1 Mg(2+) ion per subunit. May bind a second metal ion at a regulatory site, or after substrate binding.</text>
</comment>
<comment type="subunit">
    <text evidence="1">Monomer.</text>
</comment>
<comment type="subcellular location">
    <subcellularLocation>
        <location evidence="1">Cytoplasm</location>
    </subcellularLocation>
</comment>
<comment type="similarity">
    <text evidence="1">Belongs to the RNase H family.</text>
</comment>